<reference key="1">
    <citation type="journal article" date="1994" name="C. R. Acad. Sci. III, Sci. Vie">
        <title>Honeybees have putative olfactory receptor proteins similar to those of vertebrates.</title>
        <authorList>
            <person name="Danty E."/>
            <person name="Cornuet J.-M."/>
            <person name="Masson C."/>
        </authorList>
    </citation>
    <scope>NUCLEOTIDE SEQUENCE [MRNA]</scope>
    <source>
        <tissue>Antenna</tissue>
    </source>
</reference>
<keyword id="KW-1003">Cell membrane</keyword>
<keyword id="KW-0297">G-protein coupled receptor</keyword>
<keyword id="KW-0472">Membrane</keyword>
<keyword id="KW-0552">Olfaction</keyword>
<keyword id="KW-0675">Receptor</keyword>
<keyword id="KW-0716">Sensory transduction</keyword>
<keyword id="KW-0807">Transducer</keyword>
<keyword id="KW-0812">Transmembrane</keyword>
<keyword id="KW-1133">Transmembrane helix</keyword>
<organism>
    <name type="scientific">Apis mellifera ligustica</name>
    <name type="common">Common honeybee</name>
    <name type="synonym">Italian honeybee</name>
    <dbReference type="NCBI Taxonomy" id="7469"/>
    <lineage>
        <taxon>Eukaryota</taxon>
        <taxon>Metazoa</taxon>
        <taxon>Ecdysozoa</taxon>
        <taxon>Arthropoda</taxon>
        <taxon>Hexapoda</taxon>
        <taxon>Insecta</taxon>
        <taxon>Pterygota</taxon>
        <taxon>Neoptera</taxon>
        <taxon>Endopterygota</taxon>
        <taxon>Hymenoptera</taxon>
        <taxon>Apocrita</taxon>
        <taxon>Aculeata</taxon>
        <taxon>Apoidea</taxon>
        <taxon>Anthophila</taxon>
        <taxon>Apidae</taxon>
        <taxon>Apis</taxon>
    </lineage>
</organism>
<evidence type="ECO:0000255" key="1"/>
<evidence type="ECO:0000255" key="2">
    <source>
        <dbReference type="PROSITE-ProRule" id="PRU00521"/>
    </source>
</evidence>
<evidence type="ECO:0000305" key="3"/>
<comment type="function">
    <text evidence="3">Odorant receptor.</text>
</comment>
<comment type="subcellular location">
    <subcellularLocation>
        <location evidence="3">Cell membrane</location>
        <topology evidence="3">Multi-pass membrane protein</topology>
    </subcellularLocation>
</comment>
<comment type="similarity">
    <text evidence="2">Belongs to the G-protein coupled receptor 1 family.</text>
</comment>
<sequence>KLWRMTGTWLGGFCHSIIQIPVIIQLPFCGPNVIDHYFRDLQPLFKLACTDTFMEGVIVLAFSGLFSVFSFLILVSSYIVILVNLRN</sequence>
<proteinExistence type="evidence at transcript level"/>
<protein>
    <recommendedName>
        <fullName>Olfactory receptor-like protein HbT2</fullName>
    </recommendedName>
</protein>
<name>OLF2_APILI</name>
<accession>Q26420</accession>
<dbReference type="EMBL" id="S76958">
    <property type="protein sequence ID" value="AAB33933.1"/>
    <property type="molecule type" value="mRNA"/>
</dbReference>
<dbReference type="SMR" id="Q26420"/>
<dbReference type="GO" id="GO:0005886">
    <property type="term" value="C:plasma membrane"/>
    <property type="evidence" value="ECO:0007669"/>
    <property type="project" value="UniProtKB-SubCell"/>
</dbReference>
<dbReference type="GO" id="GO:0004930">
    <property type="term" value="F:G protein-coupled receptor activity"/>
    <property type="evidence" value="ECO:0007669"/>
    <property type="project" value="UniProtKB-KW"/>
</dbReference>
<dbReference type="GO" id="GO:0007608">
    <property type="term" value="P:sensory perception of smell"/>
    <property type="evidence" value="ECO:0007669"/>
    <property type="project" value="UniProtKB-KW"/>
</dbReference>
<dbReference type="InterPro" id="IPR050427">
    <property type="entry name" value="Olfactory_Receptors"/>
</dbReference>
<dbReference type="PANTHER" id="PTHR48002">
    <property type="entry name" value="OLFACTORY RECEPTOR"/>
    <property type="match status" value="1"/>
</dbReference>
<dbReference type="SUPFAM" id="SSF81321">
    <property type="entry name" value="Family A G protein-coupled receptor-like"/>
    <property type="match status" value="1"/>
</dbReference>
<feature type="chain" id="PRO_0000150889" description="Olfactory receptor-like protein HbT2">
    <location>
        <begin position="1" status="less than"/>
        <end position="87" status="greater than"/>
    </location>
</feature>
<feature type="topological domain" description="Cytoplasmic" evidence="1">
    <location>
        <begin position="1" status="less than"/>
        <end position="8"/>
    </location>
</feature>
<feature type="transmembrane region" description="Helical; Name=4" evidence="1">
    <location>
        <begin position="9"/>
        <end position="29"/>
    </location>
</feature>
<feature type="topological domain" description="Extracellular" evidence="1">
    <location>
        <begin position="30"/>
        <end position="55"/>
    </location>
</feature>
<feature type="transmembrane region" description="Helical; Name=5" evidence="1">
    <location>
        <begin position="56"/>
        <end position="76"/>
    </location>
</feature>
<feature type="topological domain" description="Cytoplasmic" evidence="1">
    <location>
        <begin position="77"/>
        <end position="87" status="greater than"/>
    </location>
</feature>
<feature type="non-terminal residue">
    <location>
        <position position="1"/>
    </location>
</feature>
<feature type="non-terminal residue">
    <location>
        <position position="87"/>
    </location>
</feature>